<reference key="1">
    <citation type="book" date="2006" name="Gram positive pathogens, 2nd edition">
        <title>The Staphylococcus aureus NCTC 8325 genome.</title>
        <editorList>
            <person name="Fischetti V."/>
            <person name="Novick R."/>
            <person name="Ferretti J."/>
            <person name="Portnoy D."/>
            <person name="Rood J."/>
        </editorList>
        <authorList>
            <person name="Gillaspy A.F."/>
            <person name="Worrell V."/>
            <person name="Orvis J."/>
            <person name="Roe B.A."/>
            <person name="Dyer D.W."/>
            <person name="Iandolo J.J."/>
        </authorList>
    </citation>
    <scope>NUCLEOTIDE SEQUENCE [LARGE SCALE GENOMIC DNA]</scope>
    <source>
        <strain>NCTC 8325 / PS 47</strain>
    </source>
</reference>
<reference key="2">
    <citation type="journal article" date="2015" name="Mol. Microbiol.">
        <title>Staphylococcus aureus haem biosynthesis: characterisation of the enzymes involved in final steps of the pathway.</title>
        <authorList>
            <person name="Lobo S.A."/>
            <person name="Scott A."/>
            <person name="Videira M.A."/>
            <person name="Winpenny D."/>
            <person name="Gardner M."/>
            <person name="Palmer M.J."/>
            <person name="Schroeder S."/>
            <person name="Lawrence A.D."/>
            <person name="Parkinson T."/>
            <person name="Warren M.J."/>
            <person name="Saraiva L.M."/>
        </authorList>
    </citation>
    <scope>FUNCTION</scope>
    <scope>CATALYTIC ACTIVITY</scope>
    <scope>COFACTOR</scope>
    <scope>ACTIVITY REGULATION</scope>
    <scope>BIOPHYSICOCHEMICAL PROPERTIES</scope>
    <scope>PATHWAY</scope>
    <source>
        <strain>NCTC 8325 / PS 47</strain>
    </source>
</reference>
<reference key="3">
    <citation type="journal article" date="2016" name="Biochem. J.">
        <title>The HemQ coprohaem decarboxylase generates reactive oxygen species: implications for the evolution of classical haem biosynthesis.</title>
        <authorList>
            <person name="Hobbs C."/>
            <person name="Dailey H.A."/>
            <person name="Shepherd M."/>
        </authorList>
    </citation>
    <scope>FUNCTION</scope>
    <scope>CATALYTIC ACTIVITY</scope>
    <scope>ACTIVITY REGULATION</scope>
    <scope>BIOPHYSICOCHEMICAL PROPERTIES</scope>
</reference>
<proteinExistence type="evidence at protein level"/>
<organism>
    <name type="scientific">Staphylococcus aureus (strain NCTC 8325 / PS 47)</name>
    <dbReference type="NCBI Taxonomy" id="93061"/>
    <lineage>
        <taxon>Bacteria</taxon>
        <taxon>Bacillati</taxon>
        <taxon>Bacillota</taxon>
        <taxon>Bacilli</taxon>
        <taxon>Bacillales</taxon>
        <taxon>Staphylococcaceae</taxon>
        <taxon>Staphylococcus</taxon>
    </lineage>
</organism>
<feature type="chain" id="PRO_0000450281" description="Coproporphyrinogen III oxidase">
    <location>
        <begin position="1"/>
        <end position="466"/>
    </location>
</feature>
<feature type="binding site" evidence="1">
    <location>
        <begin position="9"/>
        <end position="14"/>
    </location>
    <ligand>
        <name>FAD</name>
        <dbReference type="ChEBI" id="CHEBI:57692"/>
    </ligand>
</feature>
<feature type="binding site" evidence="1">
    <location>
        <begin position="34"/>
        <end position="35"/>
    </location>
    <ligand>
        <name>FAD</name>
        <dbReference type="ChEBI" id="CHEBI:57692"/>
    </ligand>
</feature>
<feature type="binding site" evidence="1">
    <location>
        <position position="42"/>
    </location>
    <ligand>
        <name>FAD</name>
        <dbReference type="ChEBI" id="CHEBI:57692"/>
    </ligand>
</feature>
<feature type="binding site" evidence="1">
    <location>
        <begin position="56"/>
        <end position="59"/>
    </location>
    <ligand>
        <name>FAD</name>
        <dbReference type="ChEBI" id="CHEBI:57692"/>
    </ligand>
</feature>
<feature type="binding site" evidence="2">
    <location>
        <position position="254"/>
    </location>
    <ligand>
        <name>FAD</name>
        <dbReference type="ChEBI" id="CHEBI:57692"/>
    </ligand>
</feature>
<feature type="binding site" evidence="1">
    <location>
        <begin position="446"/>
        <end position="448"/>
    </location>
    <ligand>
        <name>FAD</name>
        <dbReference type="ChEBI" id="CHEBI:57692"/>
    </ligand>
</feature>
<comment type="function">
    <text evidence="3 4">Involved in coproporphyrin-dependent heme b biosynthesis (PubMed:25908396). Catalyzes the oxidation of coproporphyrinogen III to coproporphyrin III (PubMed:25908396, PubMed:27597779). Can also oxidize protoporphyrinogen IX (PubMed:27597779).</text>
</comment>
<comment type="catalytic activity">
    <reaction evidence="3 4">
        <text>coproporphyrinogen III + 3 O2 = coproporphyrin III + 3 H2O2</text>
        <dbReference type="Rhea" id="RHEA:43436"/>
        <dbReference type="ChEBI" id="CHEBI:15379"/>
        <dbReference type="ChEBI" id="CHEBI:16240"/>
        <dbReference type="ChEBI" id="CHEBI:57309"/>
        <dbReference type="ChEBI" id="CHEBI:131725"/>
        <dbReference type="EC" id="1.3.3.15"/>
    </reaction>
    <physiologicalReaction direction="left-to-right" evidence="3 4">
        <dbReference type="Rhea" id="RHEA:43437"/>
    </physiologicalReaction>
</comment>
<comment type="cofactor">
    <cofactor evidence="3">
        <name>FAD</name>
        <dbReference type="ChEBI" id="CHEBI:57692"/>
    </cofactor>
    <text evidence="1">Binds 1 FAD per subunit.</text>
</comment>
<comment type="activity regulation">
    <text evidence="3 4">The generation of protoporphyrin IX, but not coproporphyrin III, is stimulated by heme-bound HemQ. This stimulatory effect is mediated by superoxide (PubMed:27597779). Inhibited by acifluorfen analogs (PubMed:25908396).</text>
</comment>
<comment type="biophysicochemical properties">
    <kinetics>
        <KM evidence="3">0.31 uM for coproporphyrinogen III</KM>
        <KM evidence="4">6.7 uM for coproporphyrinogen III</KM>
        <text evidence="3 4">kcat is 1.33 min(-1) with coproporphyrinogen III as substrate (PubMed:25908396). kcat is 0.46 min(-1) with coproporphyrinogen III as substrate (PubMed:27597779). kcat is 0.44 min(-1) with protoporphyrinogen IX as substrate (PubMed:27597779).</text>
    </kinetics>
</comment>
<comment type="pathway">
    <text evidence="3">Porphyrin-containing compound metabolism; protoheme biosynthesis.</text>
</comment>
<comment type="subcellular location">
    <subcellularLocation>
        <location evidence="6">Cytoplasm</location>
    </subcellularLocation>
</comment>
<comment type="similarity">
    <text evidence="6">Belongs to the protoporphyrinogen/coproporphyrinogen oxidase family. Coproporphyrinogen III oxidase subfamily.</text>
</comment>
<name>CGOX_STAA8</name>
<accession>Q2FXA5</accession>
<gene>
    <name evidence="1" type="primary">cgoX</name>
    <name evidence="5" type="synonym">hemY</name>
    <name evidence="7" type="ordered locus">SAOUHSC_01960</name>
</gene>
<dbReference type="EC" id="1.3.3.15" evidence="3"/>
<dbReference type="EMBL" id="CP000253">
    <property type="protein sequence ID" value="ABD31021.1"/>
    <property type="molecule type" value="Genomic_DNA"/>
</dbReference>
<dbReference type="RefSeq" id="WP_000167538.1">
    <property type="nucleotide sequence ID" value="NZ_LS483365.1"/>
</dbReference>
<dbReference type="RefSeq" id="YP_500459.1">
    <property type="nucleotide sequence ID" value="NC_007795.1"/>
</dbReference>
<dbReference type="SMR" id="Q2FXA5"/>
<dbReference type="STRING" id="93061.SAOUHSC_01960"/>
<dbReference type="PaxDb" id="1280-SAXN108_1861"/>
<dbReference type="GeneID" id="3920905"/>
<dbReference type="KEGG" id="sao:SAOUHSC_01960"/>
<dbReference type="PATRIC" id="fig|93061.5.peg.1785"/>
<dbReference type="eggNOG" id="COG1232">
    <property type="taxonomic scope" value="Bacteria"/>
</dbReference>
<dbReference type="HOGENOM" id="CLU_009629_3_0_9"/>
<dbReference type="OrthoDB" id="9805195at2"/>
<dbReference type="UniPathway" id="UPA00252"/>
<dbReference type="Proteomes" id="UP000008816">
    <property type="component" value="Chromosome"/>
</dbReference>
<dbReference type="GO" id="GO:0005737">
    <property type="term" value="C:cytoplasm"/>
    <property type="evidence" value="ECO:0007669"/>
    <property type="project" value="UniProtKB-SubCell"/>
</dbReference>
<dbReference type="GO" id="GO:0016491">
    <property type="term" value="F:oxidoreductase activity"/>
    <property type="evidence" value="ECO:0000318"/>
    <property type="project" value="GO_Central"/>
</dbReference>
<dbReference type="GO" id="GO:0004729">
    <property type="term" value="F:oxygen-dependent protoporphyrinogen oxidase activity"/>
    <property type="evidence" value="ECO:0007669"/>
    <property type="project" value="InterPro"/>
</dbReference>
<dbReference type="GO" id="GO:0006783">
    <property type="term" value="P:heme biosynthetic process"/>
    <property type="evidence" value="ECO:0007669"/>
    <property type="project" value="UniProtKB-KW"/>
</dbReference>
<dbReference type="Gene3D" id="3.50.50.60">
    <property type="entry name" value="FAD/NAD(P)-binding domain"/>
    <property type="match status" value="1"/>
</dbReference>
<dbReference type="Gene3D" id="1.10.3110.10">
    <property type="entry name" value="protoporphyrinogen ix oxidase, domain 3"/>
    <property type="match status" value="1"/>
</dbReference>
<dbReference type="Gene3D" id="3.90.660.20">
    <property type="entry name" value="Protoporphyrinogen oxidase, mitochondrial, domain 2"/>
    <property type="match status" value="1"/>
</dbReference>
<dbReference type="InterPro" id="IPR002937">
    <property type="entry name" value="Amino_oxidase"/>
</dbReference>
<dbReference type="InterPro" id="IPR036188">
    <property type="entry name" value="FAD/NAD-bd_sf"/>
</dbReference>
<dbReference type="InterPro" id="IPR004572">
    <property type="entry name" value="Protoporphyrinogen_oxidase"/>
</dbReference>
<dbReference type="InterPro" id="IPR050464">
    <property type="entry name" value="Zeta_carotene_desat/Oxidored"/>
</dbReference>
<dbReference type="NCBIfam" id="NF008845">
    <property type="entry name" value="PRK11883.1-5"/>
    <property type="match status" value="1"/>
</dbReference>
<dbReference type="NCBIfam" id="TIGR00562">
    <property type="entry name" value="proto_IX_ox"/>
    <property type="match status" value="1"/>
</dbReference>
<dbReference type="PANTHER" id="PTHR42923">
    <property type="entry name" value="PROTOPORPHYRINOGEN OXIDASE"/>
    <property type="match status" value="1"/>
</dbReference>
<dbReference type="PANTHER" id="PTHR42923:SF3">
    <property type="entry name" value="PROTOPORPHYRINOGEN OXIDASE"/>
    <property type="match status" value="1"/>
</dbReference>
<dbReference type="Pfam" id="PF01593">
    <property type="entry name" value="Amino_oxidase"/>
    <property type="match status" value="1"/>
</dbReference>
<dbReference type="SUPFAM" id="SSF54373">
    <property type="entry name" value="FAD-linked reductases, C-terminal domain"/>
    <property type="match status" value="1"/>
</dbReference>
<dbReference type="SUPFAM" id="SSF51905">
    <property type="entry name" value="FAD/NAD(P)-binding domain"/>
    <property type="match status" value="1"/>
</dbReference>
<sequence length="466" mass="51983">MTKSVAIIGAGITGLSSAYFLKQQDPNIDVTIFEASNRPGGKIQSYRKDGYMIELGPESYLGRKTIMTELAKDIGLEQDIVTNTTGQSYIFAKNKLYPIPGGSIMGIPTDIKPFVTTKLISPLGKLRAGFDLLKKPTQMQDGDISVGAFFRARLGNEVLENLIEPLMGGIYGTDIDKLSLMSTFPNFKEKEEAFGSLIKGMKDEKNKRLKQRQLYPGAPKGQFKQFKHGLSSFIEALEQDVKNKGVTIRYNTSVDDIITSQKQYKIVYNDQLEEVYDGVLVTTPHQVFLNWFGQDPAFDYFKTMDSTTVATVVLAFDEKDIENTHDGTGFVIARTSDTDITACTWTSKKWPFTTPEGKVLIRAYVGKPGDTVVDDHTDNELVSIVRRDLSQMMTFKGDPEFTIVNRLPKSMPQYHVGHIQQIRQIQAHIKQTYPRLRVTGASFEAVGLPDCITQGKVAAEEVIAEL</sequence>
<evidence type="ECO:0000250" key="1">
    <source>
        <dbReference type="UniProtKB" id="P32397"/>
    </source>
</evidence>
<evidence type="ECO:0000250" key="2">
    <source>
        <dbReference type="UniProtKB" id="P56601"/>
    </source>
</evidence>
<evidence type="ECO:0000269" key="3">
    <source>
    </source>
</evidence>
<evidence type="ECO:0000269" key="4">
    <source>
    </source>
</evidence>
<evidence type="ECO:0000303" key="5">
    <source>
    </source>
</evidence>
<evidence type="ECO:0000305" key="6"/>
<evidence type="ECO:0000312" key="7">
    <source>
        <dbReference type="EMBL" id="ABD31021.1"/>
    </source>
</evidence>
<protein>
    <recommendedName>
        <fullName evidence="5">Coproporphyrinogen III oxidase</fullName>
        <ecNumber evidence="3">1.3.3.15</ecNumber>
    </recommendedName>
    <alternativeName>
        <fullName evidence="5">Coproporphyrin III synthase</fullName>
    </alternativeName>
</protein>
<keyword id="KW-0963">Cytoplasm</keyword>
<keyword id="KW-0274">FAD</keyword>
<keyword id="KW-0285">Flavoprotein</keyword>
<keyword id="KW-0350">Heme biosynthesis</keyword>
<keyword id="KW-0560">Oxidoreductase</keyword>
<keyword id="KW-1185">Reference proteome</keyword>